<protein>
    <recommendedName>
        <fullName>Ubiquinol oxidase subunit 1</fullName>
        <ecNumber>1.10.3.-</ecNumber>
    </recommendedName>
    <alternativeName>
        <fullName>Cytochrome A1 subunit 1</fullName>
    </alternativeName>
    <alternativeName>
        <fullName>Oxidase BA(3) subunit 1</fullName>
    </alternativeName>
    <alternativeName>
        <fullName>Ubiquinol oxidase polypeptide I</fullName>
    </alternativeName>
</protein>
<accession>P98009</accession>
<reference key="1">
    <citation type="journal article" date="1993" name="J. Bacteriol.">
        <title>Characterization of a cytochrome a1 that functions as a ubiquinol oxidase in Acetobacter aceti.</title>
        <authorList>
            <person name="Fukaya M."/>
            <person name="Tayama K."/>
            <person name="Tamaki T."/>
            <person name="Ebisuya H."/>
            <person name="Okumura H."/>
            <person name="Kawamura Y."/>
            <person name="Horinouchi S."/>
            <person name="Beppu T."/>
        </authorList>
    </citation>
    <scope>NUCLEOTIDE SEQUENCE [GENOMIC DNA]</scope>
    <scope>PROTEIN SEQUENCE OF 24-32</scope>
    <source>
        <strain>1023</strain>
    </source>
</reference>
<comment type="function">
    <text>Catalytic subunit of the enzyme. Electrons originating in a quinol are transferred to the bimetallic center formed by heme a and copper B.</text>
</comment>
<comment type="subunit">
    <text>Heterotetramer of the subunits 1, 2, 3 and 4.</text>
</comment>
<comment type="subcellular location">
    <subcellularLocation>
        <location>Cell membrane</location>
        <topology>Multi-pass membrane protein</topology>
    </subcellularLocation>
</comment>
<comment type="similarity">
    <text evidence="3">Belongs to the heme-copper respiratory oxidase family.</text>
</comment>
<evidence type="ECO:0000250" key="1"/>
<evidence type="ECO:0000255" key="2"/>
<evidence type="ECO:0000305" key="3"/>
<feature type="chain" id="PRO_0000006036" description="Ubiquinol oxidase subunit 1">
    <location>
        <begin position="1"/>
        <end position="664"/>
    </location>
</feature>
<feature type="transmembrane region" description="Helical" evidence="2">
    <location>
        <begin position="15"/>
        <end position="35"/>
    </location>
</feature>
<feature type="transmembrane region" description="Helical" evidence="2">
    <location>
        <begin position="57"/>
        <end position="77"/>
    </location>
</feature>
<feature type="transmembrane region" description="Helical" evidence="2">
    <location>
        <begin position="109"/>
        <end position="129"/>
    </location>
</feature>
<feature type="transmembrane region" description="Helical" evidence="2">
    <location>
        <begin position="136"/>
        <end position="156"/>
    </location>
</feature>
<feature type="transmembrane region" description="Helical" evidence="2">
    <location>
        <begin position="190"/>
        <end position="210"/>
    </location>
</feature>
<feature type="transmembrane region" description="Helical" evidence="2">
    <location>
        <begin position="233"/>
        <end position="253"/>
    </location>
</feature>
<feature type="transmembrane region" description="Helical" evidence="2">
    <location>
        <begin position="278"/>
        <end position="298"/>
    </location>
</feature>
<feature type="transmembrane region" description="Helical" evidence="2">
    <location>
        <begin position="316"/>
        <end position="336"/>
    </location>
</feature>
<feature type="transmembrane region" description="Helical" evidence="2">
    <location>
        <begin position="347"/>
        <end position="367"/>
    </location>
</feature>
<feature type="transmembrane region" description="Helical" evidence="2">
    <location>
        <begin position="383"/>
        <end position="403"/>
    </location>
</feature>
<feature type="transmembrane region" description="Helical" evidence="2">
    <location>
        <begin position="414"/>
        <end position="434"/>
    </location>
</feature>
<feature type="transmembrane region" description="Helical" evidence="2">
    <location>
        <begin position="456"/>
        <end position="476"/>
    </location>
</feature>
<feature type="transmembrane region" description="Helical" evidence="2">
    <location>
        <begin position="490"/>
        <end position="510"/>
    </location>
</feature>
<feature type="transmembrane region" description="Helical" evidence="2">
    <location>
        <begin position="603"/>
        <end position="623"/>
    </location>
</feature>
<feature type="binding site" description="axial binding residue" evidence="3">
    <location>
        <position position="106"/>
    </location>
    <ligand>
        <name>heme b</name>
        <dbReference type="ChEBI" id="CHEBI:60344"/>
    </ligand>
    <ligandPart>
        <name>Fe</name>
        <dbReference type="ChEBI" id="CHEBI:18248"/>
    </ligandPart>
</feature>
<feature type="binding site" evidence="3">
    <location>
        <position position="284"/>
    </location>
    <ligand>
        <name>Cu cation</name>
        <dbReference type="ChEBI" id="CHEBI:23378"/>
        <label>B</label>
    </ligand>
</feature>
<feature type="binding site" evidence="3">
    <location>
        <position position="288"/>
    </location>
    <ligand>
        <name>Cu cation</name>
        <dbReference type="ChEBI" id="CHEBI:23378"/>
        <label>B</label>
    </ligand>
</feature>
<feature type="binding site" evidence="3">
    <location>
        <position position="333"/>
    </location>
    <ligand>
        <name>Cu cation</name>
        <dbReference type="ChEBI" id="CHEBI:23378"/>
        <label>B</label>
    </ligand>
</feature>
<feature type="binding site" evidence="3">
    <location>
        <position position="334"/>
    </location>
    <ligand>
        <name>Cu cation</name>
        <dbReference type="ChEBI" id="CHEBI:23378"/>
        <label>B</label>
    </ligand>
</feature>
<feature type="binding site" description="axial binding residue" evidence="3">
    <location>
        <position position="419"/>
    </location>
    <ligand>
        <name>Fe(II)-heme a</name>
        <dbReference type="ChEBI" id="CHEBI:61715"/>
    </ligand>
    <ligandPart>
        <name>Fe</name>
        <dbReference type="ChEBI" id="CHEBI:18248"/>
    </ligandPart>
</feature>
<feature type="binding site" description="axial binding residue" evidence="3">
    <location>
        <position position="421"/>
    </location>
    <ligand>
        <name>heme b</name>
        <dbReference type="ChEBI" id="CHEBI:60344"/>
    </ligand>
    <ligandPart>
        <name>Fe</name>
        <dbReference type="ChEBI" id="CHEBI:18248"/>
    </ligandPart>
</feature>
<feature type="cross-link" description="1'-histidyl-3'-tyrosine (His-Tyr)" evidence="1">
    <location>
        <begin position="284"/>
        <end position="288"/>
    </location>
</feature>
<dbReference type="EC" id="1.10.3.-"/>
<dbReference type="EMBL" id="D13185">
    <property type="protein sequence ID" value="BAA02481.1"/>
    <property type="molecule type" value="Genomic_DNA"/>
</dbReference>
<dbReference type="PIR" id="B36885">
    <property type="entry name" value="B36885"/>
</dbReference>
<dbReference type="SMR" id="P98009"/>
<dbReference type="STRING" id="435.A0U92_12075"/>
<dbReference type="GO" id="GO:0005886">
    <property type="term" value="C:plasma membrane"/>
    <property type="evidence" value="ECO:0007669"/>
    <property type="project" value="UniProtKB-SubCell"/>
</dbReference>
<dbReference type="GO" id="GO:0009486">
    <property type="term" value="F:cytochrome bo3 ubiquinol oxidase activity"/>
    <property type="evidence" value="ECO:0007669"/>
    <property type="project" value="TreeGrafter"/>
</dbReference>
<dbReference type="GO" id="GO:0004129">
    <property type="term" value="F:cytochrome-c oxidase activity"/>
    <property type="evidence" value="ECO:0007669"/>
    <property type="project" value="InterPro"/>
</dbReference>
<dbReference type="GO" id="GO:0020037">
    <property type="term" value="F:heme binding"/>
    <property type="evidence" value="ECO:0007669"/>
    <property type="project" value="InterPro"/>
</dbReference>
<dbReference type="GO" id="GO:0046872">
    <property type="term" value="F:metal ion binding"/>
    <property type="evidence" value="ECO:0007669"/>
    <property type="project" value="UniProtKB-KW"/>
</dbReference>
<dbReference type="GO" id="GO:0016682">
    <property type="term" value="F:oxidoreductase activity, acting on diphenols and related substances as donors, oxygen as acceptor"/>
    <property type="evidence" value="ECO:0007669"/>
    <property type="project" value="InterPro"/>
</dbReference>
<dbReference type="GO" id="GO:0009060">
    <property type="term" value="P:aerobic respiration"/>
    <property type="evidence" value="ECO:0007669"/>
    <property type="project" value="InterPro"/>
</dbReference>
<dbReference type="GO" id="GO:0015990">
    <property type="term" value="P:electron transport coupled proton transport"/>
    <property type="evidence" value="ECO:0007669"/>
    <property type="project" value="TreeGrafter"/>
</dbReference>
<dbReference type="GO" id="GO:0022904">
    <property type="term" value="P:respiratory electron transport chain"/>
    <property type="evidence" value="ECO:0007669"/>
    <property type="project" value="TreeGrafter"/>
</dbReference>
<dbReference type="CDD" id="cd01662">
    <property type="entry name" value="Ubiquinol_Oxidase_I"/>
    <property type="match status" value="1"/>
</dbReference>
<dbReference type="FunFam" id="1.20.210.10:FF:000002">
    <property type="entry name" value="Cytochrome o ubiquinol oxidase, subunit I"/>
    <property type="match status" value="1"/>
</dbReference>
<dbReference type="Gene3D" id="1.20.210.10">
    <property type="entry name" value="Cytochrome c oxidase-like, subunit I domain"/>
    <property type="match status" value="1"/>
</dbReference>
<dbReference type="InterPro" id="IPR023616">
    <property type="entry name" value="Cyt_c_oxase-like_su1_dom"/>
</dbReference>
<dbReference type="InterPro" id="IPR036927">
    <property type="entry name" value="Cyt_c_oxase-like_su1_sf"/>
</dbReference>
<dbReference type="InterPro" id="IPR000883">
    <property type="entry name" value="Cyt_C_Oxase_1"/>
</dbReference>
<dbReference type="InterPro" id="IPR023615">
    <property type="entry name" value="Cyt_c_Oxase_su1_BS"/>
</dbReference>
<dbReference type="InterPro" id="IPR014207">
    <property type="entry name" value="Cyt_c_ubiqinol_oxidase_su1"/>
</dbReference>
<dbReference type="NCBIfam" id="TIGR02843">
    <property type="entry name" value="CyoB"/>
    <property type="match status" value="1"/>
</dbReference>
<dbReference type="PANTHER" id="PTHR10422:SF35">
    <property type="entry name" value="CYTOCHROME BO(3) UBIQUINOL OXIDASE SUBUNIT 1"/>
    <property type="match status" value="1"/>
</dbReference>
<dbReference type="PANTHER" id="PTHR10422">
    <property type="entry name" value="CYTOCHROME C OXIDASE SUBUNIT 1"/>
    <property type="match status" value="1"/>
</dbReference>
<dbReference type="Pfam" id="PF00115">
    <property type="entry name" value="COX1"/>
    <property type="match status" value="1"/>
</dbReference>
<dbReference type="PRINTS" id="PR01165">
    <property type="entry name" value="CYCOXIDASEI"/>
</dbReference>
<dbReference type="SUPFAM" id="SSF81442">
    <property type="entry name" value="Cytochrome c oxidase subunit I-like"/>
    <property type="match status" value="1"/>
</dbReference>
<dbReference type="PROSITE" id="PS50855">
    <property type="entry name" value="COX1"/>
    <property type="match status" value="1"/>
</dbReference>
<dbReference type="PROSITE" id="PS00077">
    <property type="entry name" value="COX1_CUB"/>
    <property type="match status" value="1"/>
</dbReference>
<name>QOX1_ACEAC</name>
<keyword id="KW-1003">Cell membrane</keyword>
<keyword id="KW-0186">Copper</keyword>
<keyword id="KW-0903">Direct protein sequencing</keyword>
<keyword id="KW-0249">Electron transport</keyword>
<keyword id="KW-0349">Heme</keyword>
<keyword id="KW-0408">Iron</keyword>
<keyword id="KW-0472">Membrane</keyword>
<keyword id="KW-0479">Metal-binding</keyword>
<keyword id="KW-0560">Oxidoreductase</keyword>
<keyword id="KW-0679">Respiratory chain</keyword>
<keyword id="KW-0812">Transmembrane</keyword>
<keyword id="KW-1133">Transmembrane helix</keyword>
<keyword id="KW-0813">Transport</keyword>
<organism>
    <name type="scientific">Acetobacter aceti</name>
    <dbReference type="NCBI Taxonomy" id="435"/>
    <lineage>
        <taxon>Bacteria</taxon>
        <taxon>Pseudomonadati</taxon>
        <taxon>Pseudomonadota</taxon>
        <taxon>Alphaproteobacteria</taxon>
        <taxon>Acetobacterales</taxon>
        <taxon>Acetobacteraceae</taxon>
        <taxon>Acetobacter</taxon>
        <taxon>Acetobacter subgen. Acetobacter</taxon>
    </lineage>
</organism>
<gene>
    <name type="primary">cyaA</name>
</gene>
<proteinExistence type="evidence at protein level"/>
<sequence>MLGRLSLSAIPLDVPILVGTFIGVVIVGVAVLGLITYYGKWGYLWKEWFTSVDHKRLAAMYIILALVALFRGFADAIMMRTQLALAYAGNPGYLPPHHYDQIFSAHGTIMIFFLAMAFMTGLFNFIVPLQIGARDVAFPFLNNLSFWMTAVAFILVNVSLFIGEFSQCGWLAYPPLSENQFSPGVGVDYYIWAVQISGVGTLLTGVNFFVTIVKMRAPGMTWRKMPVFTWTALCASILIMVAFPVLTVAVGLLGMDRYFGMHFFTNDGGGNQMMYLNLIWAWGHPEVYILVIPAFGVFSEVVPAFSGKPLFGYSTMVYATCSIMVLSFLVWVHHFFTMGAGPDVNAFFGIATMIISIPTGIKLFNWLFTMYKGRIQFHACMYWAVGFMITFTIGGMTGVMLAIPGADFVLHNSLFLIAHFHNTIIGGVYFGYICGMNFWFPKVMGFKLDETWGKRAFWFWFVGFYCAFVPLYIVGFEGMTRRLNHYDNPAWHPWLLVAEVGAVLVMLGIACQLTQLYVSIRDRNLPQNRDVTGDPWNGRTLEWSTSSPPPVYNFAIVPHVHELDTFMLDKENGIDTRQAGAQYEAIHMPKNTSFGSGLCKCSALIFGFAAVWYIWWLAAVGLVGVIGTVIARSADKDIDYYIPAEEVARIENEHTRKLMAQAAE</sequence>